<name>MTGA_XANE5</name>
<gene>
    <name evidence="1" type="primary">mtgA</name>
    <name type="ordered locus">XCV3184</name>
</gene>
<organism>
    <name type="scientific">Xanthomonas euvesicatoria pv. vesicatoria (strain 85-10)</name>
    <name type="common">Xanthomonas campestris pv. vesicatoria</name>
    <dbReference type="NCBI Taxonomy" id="316273"/>
    <lineage>
        <taxon>Bacteria</taxon>
        <taxon>Pseudomonadati</taxon>
        <taxon>Pseudomonadota</taxon>
        <taxon>Gammaproteobacteria</taxon>
        <taxon>Lysobacterales</taxon>
        <taxon>Lysobacteraceae</taxon>
        <taxon>Xanthomonas</taxon>
    </lineage>
</organism>
<comment type="function">
    <text evidence="1">Peptidoglycan polymerase that catalyzes glycan chain elongation from lipid-linked precursors.</text>
</comment>
<comment type="catalytic activity">
    <reaction evidence="1">
        <text>[GlcNAc-(1-&gt;4)-Mur2Ac(oyl-L-Ala-gamma-D-Glu-L-Lys-D-Ala-D-Ala)](n)-di-trans,octa-cis-undecaprenyl diphosphate + beta-D-GlcNAc-(1-&gt;4)-Mur2Ac(oyl-L-Ala-gamma-D-Glu-L-Lys-D-Ala-D-Ala)-di-trans,octa-cis-undecaprenyl diphosphate = [GlcNAc-(1-&gt;4)-Mur2Ac(oyl-L-Ala-gamma-D-Glu-L-Lys-D-Ala-D-Ala)](n+1)-di-trans,octa-cis-undecaprenyl diphosphate + di-trans,octa-cis-undecaprenyl diphosphate + H(+)</text>
        <dbReference type="Rhea" id="RHEA:23708"/>
        <dbReference type="Rhea" id="RHEA-COMP:9602"/>
        <dbReference type="Rhea" id="RHEA-COMP:9603"/>
        <dbReference type="ChEBI" id="CHEBI:15378"/>
        <dbReference type="ChEBI" id="CHEBI:58405"/>
        <dbReference type="ChEBI" id="CHEBI:60033"/>
        <dbReference type="ChEBI" id="CHEBI:78435"/>
        <dbReference type="EC" id="2.4.99.28"/>
    </reaction>
</comment>
<comment type="pathway">
    <text evidence="1">Cell wall biogenesis; peptidoglycan biosynthesis.</text>
</comment>
<comment type="subcellular location">
    <subcellularLocation>
        <location evidence="1">Cell inner membrane</location>
        <topology evidence="1">Single-pass membrane protein</topology>
    </subcellularLocation>
</comment>
<comment type="similarity">
    <text evidence="1">Belongs to the glycosyltransferase 51 family.</text>
</comment>
<keyword id="KW-0997">Cell inner membrane</keyword>
<keyword id="KW-1003">Cell membrane</keyword>
<keyword id="KW-0133">Cell shape</keyword>
<keyword id="KW-0961">Cell wall biogenesis/degradation</keyword>
<keyword id="KW-0328">Glycosyltransferase</keyword>
<keyword id="KW-0472">Membrane</keyword>
<keyword id="KW-0573">Peptidoglycan synthesis</keyword>
<keyword id="KW-0808">Transferase</keyword>
<keyword id="KW-0812">Transmembrane</keyword>
<keyword id="KW-1133">Transmembrane helix</keyword>
<dbReference type="EC" id="2.4.99.28" evidence="1"/>
<dbReference type="EMBL" id="AM039952">
    <property type="protein sequence ID" value="CAJ24915.1"/>
    <property type="molecule type" value="Genomic_DNA"/>
</dbReference>
<dbReference type="RefSeq" id="WP_011348204.1">
    <property type="nucleotide sequence ID" value="NZ_CP017190.1"/>
</dbReference>
<dbReference type="SMR" id="Q3BQP8"/>
<dbReference type="STRING" id="456327.BJD11_06885"/>
<dbReference type="CAZy" id="GT51">
    <property type="family name" value="Glycosyltransferase Family 51"/>
</dbReference>
<dbReference type="KEGG" id="xcv:XCV3184"/>
<dbReference type="eggNOG" id="COG0744">
    <property type="taxonomic scope" value="Bacteria"/>
</dbReference>
<dbReference type="HOGENOM" id="CLU_006354_1_1_6"/>
<dbReference type="UniPathway" id="UPA00219"/>
<dbReference type="Proteomes" id="UP000007069">
    <property type="component" value="Chromosome"/>
</dbReference>
<dbReference type="GO" id="GO:0009274">
    <property type="term" value="C:peptidoglycan-based cell wall"/>
    <property type="evidence" value="ECO:0007669"/>
    <property type="project" value="InterPro"/>
</dbReference>
<dbReference type="GO" id="GO:0005886">
    <property type="term" value="C:plasma membrane"/>
    <property type="evidence" value="ECO:0007669"/>
    <property type="project" value="UniProtKB-SubCell"/>
</dbReference>
<dbReference type="GO" id="GO:0016763">
    <property type="term" value="F:pentosyltransferase activity"/>
    <property type="evidence" value="ECO:0007669"/>
    <property type="project" value="InterPro"/>
</dbReference>
<dbReference type="GO" id="GO:0008955">
    <property type="term" value="F:peptidoglycan glycosyltransferase activity"/>
    <property type="evidence" value="ECO:0007669"/>
    <property type="project" value="UniProtKB-UniRule"/>
</dbReference>
<dbReference type="GO" id="GO:0071555">
    <property type="term" value="P:cell wall organization"/>
    <property type="evidence" value="ECO:0007669"/>
    <property type="project" value="UniProtKB-KW"/>
</dbReference>
<dbReference type="GO" id="GO:0009252">
    <property type="term" value="P:peptidoglycan biosynthetic process"/>
    <property type="evidence" value="ECO:0007669"/>
    <property type="project" value="UniProtKB-UniRule"/>
</dbReference>
<dbReference type="GO" id="GO:0008360">
    <property type="term" value="P:regulation of cell shape"/>
    <property type="evidence" value="ECO:0007669"/>
    <property type="project" value="UniProtKB-KW"/>
</dbReference>
<dbReference type="Gene3D" id="1.10.3810.10">
    <property type="entry name" value="Biosynthetic peptidoglycan transglycosylase-like"/>
    <property type="match status" value="1"/>
</dbReference>
<dbReference type="HAMAP" id="MF_00766">
    <property type="entry name" value="PGT_MtgA"/>
    <property type="match status" value="1"/>
</dbReference>
<dbReference type="InterPro" id="IPR001264">
    <property type="entry name" value="Glyco_trans_51"/>
</dbReference>
<dbReference type="InterPro" id="IPR023346">
    <property type="entry name" value="Lysozyme-like_dom_sf"/>
</dbReference>
<dbReference type="InterPro" id="IPR036950">
    <property type="entry name" value="PBP_transglycosylase"/>
</dbReference>
<dbReference type="InterPro" id="IPR011812">
    <property type="entry name" value="Pep_trsgly"/>
</dbReference>
<dbReference type="NCBIfam" id="TIGR02070">
    <property type="entry name" value="mono_pep_trsgly"/>
    <property type="match status" value="1"/>
</dbReference>
<dbReference type="PANTHER" id="PTHR30400:SF0">
    <property type="entry name" value="BIOSYNTHETIC PEPTIDOGLYCAN TRANSGLYCOSYLASE"/>
    <property type="match status" value="1"/>
</dbReference>
<dbReference type="PANTHER" id="PTHR30400">
    <property type="entry name" value="MONOFUNCTIONAL BIOSYNTHETIC PEPTIDOGLYCAN TRANSGLYCOSYLASE"/>
    <property type="match status" value="1"/>
</dbReference>
<dbReference type="Pfam" id="PF00912">
    <property type="entry name" value="Transgly"/>
    <property type="match status" value="1"/>
</dbReference>
<dbReference type="SUPFAM" id="SSF53955">
    <property type="entry name" value="Lysozyme-like"/>
    <property type="match status" value="1"/>
</dbReference>
<proteinExistence type="inferred from homology"/>
<reference key="1">
    <citation type="journal article" date="2005" name="J. Bacteriol.">
        <title>Insights into genome plasticity and pathogenicity of the plant pathogenic Bacterium Xanthomonas campestris pv. vesicatoria revealed by the complete genome sequence.</title>
        <authorList>
            <person name="Thieme F."/>
            <person name="Koebnik R."/>
            <person name="Bekel T."/>
            <person name="Berger C."/>
            <person name="Boch J."/>
            <person name="Buettner D."/>
            <person name="Caldana C."/>
            <person name="Gaigalat L."/>
            <person name="Goesmann A."/>
            <person name="Kay S."/>
            <person name="Kirchner O."/>
            <person name="Lanz C."/>
            <person name="Linke B."/>
            <person name="McHardy A.C."/>
            <person name="Meyer F."/>
            <person name="Mittenhuber G."/>
            <person name="Nies D.H."/>
            <person name="Niesbach-Kloesgen U."/>
            <person name="Patschkowski T."/>
            <person name="Rueckert C."/>
            <person name="Rupp O."/>
            <person name="Schneiker S."/>
            <person name="Schuster S.C."/>
            <person name="Vorhoelter F.J."/>
            <person name="Weber E."/>
            <person name="Puehler A."/>
            <person name="Bonas U."/>
            <person name="Bartels D."/>
            <person name="Kaiser O."/>
        </authorList>
    </citation>
    <scope>NUCLEOTIDE SEQUENCE [LARGE SCALE GENOMIC DNA]</scope>
    <source>
        <strain>85-10</strain>
    </source>
</reference>
<feature type="chain" id="PRO_0000257697" description="Biosynthetic peptidoglycan transglycosylase">
    <location>
        <begin position="1"/>
        <end position="248"/>
    </location>
</feature>
<feature type="transmembrane region" description="Helical" evidence="1">
    <location>
        <begin position="20"/>
        <end position="42"/>
    </location>
</feature>
<sequence length="248" mass="28153">MGMDAWDGKQAAPPRRARRWLRWLMAAPLLFAAASVLQVLILRVVDPPISSMMVGRYLEAWGEGDWRFSLHQQWRDYDKIAASLPILVVAAEDQQFPMHHGFDLQAIEKARDHNARGGRVRGASTISQQVAKNVFLWQGRSWVRKGLEAWYTVLIELFWPKQRILEMYLNVAEFGDGVYGAQAAAQQFWSKDAAGLSPSESARLAAVLPSPRRYDARRPGAFVQRRATWIQRQARQLGGPVYLQGPSR</sequence>
<evidence type="ECO:0000255" key="1">
    <source>
        <dbReference type="HAMAP-Rule" id="MF_00766"/>
    </source>
</evidence>
<accession>Q3BQP8</accession>
<protein>
    <recommendedName>
        <fullName evidence="1">Biosynthetic peptidoglycan transglycosylase</fullName>
        <ecNumber evidence="1">2.4.99.28</ecNumber>
    </recommendedName>
    <alternativeName>
        <fullName evidence="1">Glycan polymerase</fullName>
    </alternativeName>
    <alternativeName>
        <fullName evidence="1">Peptidoglycan glycosyltransferase MtgA</fullName>
        <shortName evidence="1">PGT</shortName>
    </alternativeName>
</protein>